<gene>
    <name evidence="1" type="primary">atpC</name>
    <name type="ordered locus">CHAB381_0688</name>
</gene>
<comment type="function">
    <text evidence="1">Produces ATP from ADP in the presence of a proton gradient across the membrane.</text>
</comment>
<comment type="subunit">
    <text evidence="1">F-type ATPases have 2 components, CF(1) - the catalytic core - and CF(0) - the membrane proton channel. CF(1) has five subunits: alpha(3), beta(3), gamma(1), delta(1), epsilon(1). CF(0) has three main subunits: a, b and c.</text>
</comment>
<comment type="subcellular location">
    <subcellularLocation>
        <location evidence="1">Cell inner membrane</location>
        <topology evidence="1">Peripheral membrane protein</topology>
    </subcellularLocation>
</comment>
<comment type="similarity">
    <text evidence="1">Belongs to the ATPase epsilon chain family.</text>
</comment>
<dbReference type="EMBL" id="CP000776">
    <property type="protein sequence ID" value="ABS52032.1"/>
    <property type="molecule type" value="Genomic_DNA"/>
</dbReference>
<dbReference type="RefSeq" id="WP_012108556.1">
    <property type="nucleotide sequence ID" value="NC_009714.1"/>
</dbReference>
<dbReference type="SMR" id="A7I178"/>
<dbReference type="STRING" id="360107.CHAB381_0688"/>
<dbReference type="KEGG" id="cha:CHAB381_0688"/>
<dbReference type="eggNOG" id="COG0355">
    <property type="taxonomic scope" value="Bacteria"/>
</dbReference>
<dbReference type="HOGENOM" id="CLU_084338_2_1_7"/>
<dbReference type="OrthoDB" id="9799969at2"/>
<dbReference type="Proteomes" id="UP000002407">
    <property type="component" value="Chromosome"/>
</dbReference>
<dbReference type="GO" id="GO:0005886">
    <property type="term" value="C:plasma membrane"/>
    <property type="evidence" value="ECO:0007669"/>
    <property type="project" value="UniProtKB-SubCell"/>
</dbReference>
<dbReference type="GO" id="GO:0045259">
    <property type="term" value="C:proton-transporting ATP synthase complex"/>
    <property type="evidence" value="ECO:0007669"/>
    <property type="project" value="UniProtKB-KW"/>
</dbReference>
<dbReference type="GO" id="GO:0005524">
    <property type="term" value="F:ATP binding"/>
    <property type="evidence" value="ECO:0007669"/>
    <property type="project" value="UniProtKB-UniRule"/>
</dbReference>
<dbReference type="GO" id="GO:0046933">
    <property type="term" value="F:proton-transporting ATP synthase activity, rotational mechanism"/>
    <property type="evidence" value="ECO:0007669"/>
    <property type="project" value="UniProtKB-UniRule"/>
</dbReference>
<dbReference type="CDD" id="cd12152">
    <property type="entry name" value="F1-ATPase_delta"/>
    <property type="match status" value="1"/>
</dbReference>
<dbReference type="Gene3D" id="2.60.15.10">
    <property type="entry name" value="F0F1 ATP synthase delta/epsilon subunit, N-terminal"/>
    <property type="match status" value="1"/>
</dbReference>
<dbReference type="HAMAP" id="MF_00530">
    <property type="entry name" value="ATP_synth_epsil_bac"/>
    <property type="match status" value="1"/>
</dbReference>
<dbReference type="InterPro" id="IPR001469">
    <property type="entry name" value="ATP_synth_F1_dsu/esu"/>
</dbReference>
<dbReference type="InterPro" id="IPR020546">
    <property type="entry name" value="ATP_synth_F1_dsu/esu_N"/>
</dbReference>
<dbReference type="InterPro" id="IPR036771">
    <property type="entry name" value="ATPsynth_dsu/esu_N"/>
</dbReference>
<dbReference type="NCBIfam" id="TIGR01216">
    <property type="entry name" value="ATP_synt_epsi"/>
    <property type="match status" value="1"/>
</dbReference>
<dbReference type="PANTHER" id="PTHR13822">
    <property type="entry name" value="ATP SYNTHASE DELTA/EPSILON CHAIN"/>
    <property type="match status" value="1"/>
</dbReference>
<dbReference type="PANTHER" id="PTHR13822:SF10">
    <property type="entry name" value="ATP SYNTHASE EPSILON CHAIN, CHLOROPLASTIC"/>
    <property type="match status" value="1"/>
</dbReference>
<dbReference type="Pfam" id="PF02823">
    <property type="entry name" value="ATP-synt_DE_N"/>
    <property type="match status" value="1"/>
</dbReference>
<dbReference type="SUPFAM" id="SSF51344">
    <property type="entry name" value="Epsilon subunit of F1F0-ATP synthase N-terminal domain"/>
    <property type="match status" value="1"/>
</dbReference>
<proteinExistence type="inferred from homology"/>
<accession>A7I178</accession>
<sequence length="130" mass="13882">MDKLFLEIVTPEGEIFANDVKSVQVPGCEGEFGILPRHATLVTTLNAGVIEVINLDGTKDMIAIDDGGCIKVAEDKTTILANGAVYIGGSNESEIAISLQKAKELVKSMSSNTIVYATTIAKIDEQVRQK</sequence>
<reference key="1">
    <citation type="submission" date="2007-07" db="EMBL/GenBank/DDBJ databases">
        <title>Complete genome sequence of Campylobacter hominis ATCC BAA-381, a commensal isolated from the human gastrointestinal tract.</title>
        <authorList>
            <person name="Fouts D.E."/>
            <person name="Mongodin E.F."/>
            <person name="Puiu D."/>
            <person name="Sebastian Y."/>
            <person name="Miller W.G."/>
            <person name="Mandrell R.E."/>
            <person name="Nelson K.E."/>
        </authorList>
    </citation>
    <scope>NUCLEOTIDE SEQUENCE [LARGE SCALE GENOMIC DNA]</scope>
    <source>
        <strain>ATCC BAA-381 / DSM 21671 / CCUG 45161 / LMG 19568 / NCTC 13146 / CH001A</strain>
    </source>
</reference>
<organism>
    <name type="scientific">Campylobacter hominis (strain ATCC BAA-381 / DSM 21671 / CCUG 45161 / LMG 19568 / NCTC 13146 / CH001A)</name>
    <dbReference type="NCBI Taxonomy" id="360107"/>
    <lineage>
        <taxon>Bacteria</taxon>
        <taxon>Pseudomonadati</taxon>
        <taxon>Campylobacterota</taxon>
        <taxon>Epsilonproteobacteria</taxon>
        <taxon>Campylobacterales</taxon>
        <taxon>Campylobacteraceae</taxon>
        <taxon>Campylobacter</taxon>
    </lineage>
</organism>
<evidence type="ECO:0000255" key="1">
    <source>
        <dbReference type="HAMAP-Rule" id="MF_00530"/>
    </source>
</evidence>
<feature type="chain" id="PRO_1000056469" description="ATP synthase epsilon chain">
    <location>
        <begin position="1"/>
        <end position="130"/>
    </location>
</feature>
<keyword id="KW-0066">ATP synthesis</keyword>
<keyword id="KW-0997">Cell inner membrane</keyword>
<keyword id="KW-1003">Cell membrane</keyword>
<keyword id="KW-0139">CF(1)</keyword>
<keyword id="KW-0375">Hydrogen ion transport</keyword>
<keyword id="KW-0406">Ion transport</keyword>
<keyword id="KW-0472">Membrane</keyword>
<keyword id="KW-1185">Reference proteome</keyword>
<keyword id="KW-0813">Transport</keyword>
<name>ATPE_CAMHC</name>
<protein>
    <recommendedName>
        <fullName evidence="1">ATP synthase epsilon chain</fullName>
    </recommendedName>
    <alternativeName>
        <fullName evidence="1">ATP synthase F1 sector epsilon subunit</fullName>
    </alternativeName>
    <alternativeName>
        <fullName evidence="1">F-ATPase epsilon subunit</fullName>
    </alternativeName>
</protein>